<proteinExistence type="inferred from homology"/>
<organism>
    <name type="scientific">Methylophilus methylotrophus</name>
    <name type="common">Bacterium W3A1</name>
    <dbReference type="NCBI Taxonomy" id="17"/>
    <lineage>
        <taxon>Bacteria</taxon>
        <taxon>Pseudomonadati</taxon>
        <taxon>Pseudomonadota</taxon>
        <taxon>Betaproteobacteria</taxon>
        <taxon>Nitrosomonadales</taxon>
        <taxon>Methylophilaceae</taxon>
        <taxon>Methylophilus</taxon>
    </lineage>
</organism>
<comment type="function">
    <text evidence="1">Modulates RecA activity.</text>
</comment>
<comment type="subcellular location">
    <subcellularLocation>
        <location evidence="2">Cytoplasm</location>
    </subcellularLocation>
</comment>
<comment type="similarity">
    <text evidence="2">Belongs to the RecX family.</text>
</comment>
<dbReference type="EMBL" id="X59514">
    <property type="status" value="NOT_ANNOTATED_CDS"/>
    <property type="molecule type" value="Genomic_DNA"/>
</dbReference>
<dbReference type="SMR" id="P37865"/>
<dbReference type="GO" id="GO:0005737">
    <property type="term" value="C:cytoplasm"/>
    <property type="evidence" value="ECO:0007669"/>
    <property type="project" value="UniProtKB-SubCell"/>
</dbReference>
<dbReference type="Gene3D" id="1.10.10.10">
    <property type="entry name" value="Winged helix-like DNA-binding domain superfamily/Winged helix DNA-binding domain"/>
    <property type="match status" value="1"/>
</dbReference>
<dbReference type="InterPro" id="IPR036388">
    <property type="entry name" value="WH-like_DNA-bd_sf"/>
</dbReference>
<evidence type="ECO:0000250" key="1"/>
<evidence type="ECO:0000305" key="2"/>
<gene>
    <name type="primary">recX</name>
</gene>
<keyword id="KW-0963">Cytoplasm</keyword>
<accession>P37865</accession>
<feature type="chain" id="PRO_0000162447" description="Regulatory protein RecX">
    <location>
        <begin position="1"/>
        <end position="31" status="greater than"/>
    </location>
</feature>
<feature type="non-terminal residue">
    <location>
        <position position="31"/>
    </location>
</feature>
<protein>
    <recommendedName>
        <fullName>Regulatory protein RecX</fullName>
    </recommendedName>
</protein>
<name>RECX_METME</name>
<reference key="1">
    <citation type="journal article" date="1991" name="Appl. Microbiol. Biotechnol.">
        <title>Molecular cloning and characterization of the recA gene of Methylomonas clara and construction of recA deficient mutant.</title>
        <authorList>
            <person name="Ridder R."/>
            <person name="Marquardt R."/>
            <person name="Esser K."/>
        </authorList>
    </citation>
    <scope>NUCLEOTIDE SEQUENCE [GENOMIC DNA]</scope>
    <source>
        <strain>ATCC 31226 / DSM 6330 / FH-B-5460</strain>
    </source>
</reference>
<reference key="2">
    <citation type="journal article" date="1994" name="Nucleic Acids Res.">
        <title>A putative regulatory gene downstream of recA is conserved in Gram-negative and Gram-positive bacteria.</title>
        <authorList>
            <person name="de Mot R."/>
            <person name="Schoofs G."/>
            <person name="Vanderleyden J."/>
        </authorList>
    </citation>
    <scope>IDENTIFICATION</scope>
</reference>
<sequence>MRQPIEKSLRQRALEYLSKREYSAVELAQKL</sequence>